<proteinExistence type="evidence at protein level"/>
<evidence type="ECO:0000250" key="1"/>
<evidence type="ECO:0000269" key="2">
    <source>
    </source>
</evidence>
<evidence type="ECO:0000305" key="3"/>
<evidence type="ECO:0000305" key="4">
    <source>
    </source>
</evidence>
<evidence type="ECO:0007829" key="5">
    <source>
        <dbReference type="PDB" id="6OVL"/>
    </source>
</evidence>
<evidence type="ECO:0007829" key="6">
    <source>
        <dbReference type="PDB" id="6OXN"/>
    </source>
</evidence>
<organism>
    <name type="scientific">Escherichia coli (strain K12)</name>
    <dbReference type="NCBI Taxonomy" id="83333"/>
    <lineage>
        <taxon>Bacteria</taxon>
        <taxon>Pseudomonadati</taxon>
        <taxon>Pseudomonadota</taxon>
        <taxon>Gammaproteobacteria</taxon>
        <taxon>Enterobacterales</taxon>
        <taxon>Enterobacteriaceae</taxon>
        <taxon>Escherichia</taxon>
    </lineage>
</organism>
<name>GHRA_ECOLI</name>
<comment type="function">
    <text>Catalyzes the NADPH-dependent reduction of glyoxylate and hydroxypyruvate into glycolate and glycerate, respectively. Inactive towards 2-oxo-D-gluconate, 2-oxoglutarate, oxaloacetate and pyruvate. Only D- and L-glycerate are involved in the oxidative activity with NADP. Activity with NAD is very low.</text>
</comment>
<comment type="catalytic activity">
    <reaction evidence="2">
        <text>glycolate + NADP(+) = glyoxylate + NADPH + H(+)</text>
        <dbReference type="Rhea" id="RHEA:10992"/>
        <dbReference type="ChEBI" id="CHEBI:15378"/>
        <dbReference type="ChEBI" id="CHEBI:29805"/>
        <dbReference type="ChEBI" id="CHEBI:36655"/>
        <dbReference type="ChEBI" id="CHEBI:57783"/>
        <dbReference type="ChEBI" id="CHEBI:58349"/>
        <dbReference type="EC" id="1.1.1.79"/>
    </reaction>
</comment>
<comment type="catalytic activity">
    <reaction evidence="2">
        <text>(R)-glycerate + NAD(+) = 3-hydroxypyruvate + NADH + H(+)</text>
        <dbReference type="Rhea" id="RHEA:17905"/>
        <dbReference type="ChEBI" id="CHEBI:15378"/>
        <dbReference type="ChEBI" id="CHEBI:16659"/>
        <dbReference type="ChEBI" id="CHEBI:17180"/>
        <dbReference type="ChEBI" id="CHEBI:57540"/>
        <dbReference type="ChEBI" id="CHEBI:57945"/>
        <dbReference type="EC" id="1.1.1.81"/>
    </reaction>
</comment>
<comment type="catalytic activity">
    <reaction evidence="2">
        <text>(R)-glycerate + NADP(+) = 3-hydroxypyruvate + NADPH + H(+)</text>
        <dbReference type="Rhea" id="RHEA:18657"/>
        <dbReference type="ChEBI" id="CHEBI:15378"/>
        <dbReference type="ChEBI" id="CHEBI:16659"/>
        <dbReference type="ChEBI" id="CHEBI:17180"/>
        <dbReference type="ChEBI" id="CHEBI:57783"/>
        <dbReference type="ChEBI" id="CHEBI:58349"/>
        <dbReference type="EC" id="1.1.1.81"/>
    </reaction>
</comment>
<comment type="biophysicochemical properties">
    <kinetics>
        <KM evidence="2">0.6 mM for glyoxylate (at 25 degrees Celsius and pH 7)</KM>
        <KM evidence="2">1 mM for hydroxypyruvate (at 25 degrees Celsius and pH 7)</KM>
        <Vmax evidence="2">120.0 umol/min/mg enzyme with glyoxylate as substrate (at 25 degrees Celsius and pH 7)</Vmax>
        <Vmax evidence="2">20.0 umol/min/mg enzyme with hydroxypyruvate as substrate (at 25 degrees Celsius and pH 7)</Vmax>
        <text>The catalytic efficiency is better for glyoxylate than hydroxypyruvate with NADPH as electron donor.</text>
    </kinetics>
    <phDependence>
        <text evidence="2">Optimum pH is 7.0.</text>
    </phDependence>
</comment>
<comment type="subcellular location">
    <subcellularLocation>
        <location evidence="4">Cytoplasm</location>
    </subcellularLocation>
</comment>
<comment type="induction">
    <text evidence="2">Constitutively expressed.</text>
</comment>
<comment type="similarity">
    <text evidence="3">Belongs to the D-isomer specific 2-hydroxyacid dehydrogenase family. GhrA subfamily.</text>
</comment>
<dbReference type="EC" id="1.1.1.79"/>
<dbReference type="EC" id="1.1.1.81"/>
<dbReference type="EMBL" id="U00096">
    <property type="protein sequence ID" value="AAC74117.2"/>
    <property type="molecule type" value="Genomic_DNA"/>
</dbReference>
<dbReference type="EMBL" id="AP009048">
    <property type="protein sequence ID" value="BAA35814.1"/>
    <property type="molecule type" value="Genomic_DNA"/>
</dbReference>
<dbReference type="PIR" id="F64845">
    <property type="entry name" value="F64845"/>
</dbReference>
<dbReference type="RefSeq" id="NP_415551.2">
    <property type="nucleotide sequence ID" value="NC_000913.3"/>
</dbReference>
<dbReference type="RefSeq" id="WP_000351317.1">
    <property type="nucleotide sequence ID" value="NZ_SSZK01000090.1"/>
</dbReference>
<dbReference type="PDB" id="6OVL">
    <property type="method" value="X-ray"/>
    <property type="resolution" value="2.10 A"/>
    <property type="chains" value="A=1-312"/>
</dbReference>
<dbReference type="PDB" id="6OXN">
    <property type="method" value="X-ray"/>
    <property type="resolution" value="2.61 A"/>
    <property type="chains" value="A=1-312"/>
</dbReference>
<dbReference type="PDB" id="6P35">
    <property type="method" value="X-ray"/>
    <property type="resolution" value="2.50 A"/>
    <property type="chains" value="A=1-312"/>
</dbReference>
<dbReference type="PDBsum" id="6OVL"/>
<dbReference type="PDBsum" id="6OXN"/>
<dbReference type="PDBsum" id="6P35"/>
<dbReference type="SMR" id="P75913"/>
<dbReference type="BioGRID" id="4260060">
    <property type="interactions" value="18"/>
</dbReference>
<dbReference type="BioGRID" id="850788">
    <property type="interactions" value="1"/>
</dbReference>
<dbReference type="FunCoup" id="P75913">
    <property type="interactions" value="215"/>
</dbReference>
<dbReference type="IntAct" id="P75913">
    <property type="interactions" value="1"/>
</dbReference>
<dbReference type="STRING" id="511145.b1033"/>
<dbReference type="jPOST" id="P75913"/>
<dbReference type="PaxDb" id="511145-b1033"/>
<dbReference type="EnsemblBacteria" id="AAC74117">
    <property type="protein sequence ID" value="AAC74117"/>
    <property type="gene ID" value="b1033"/>
</dbReference>
<dbReference type="GeneID" id="93776385"/>
<dbReference type="GeneID" id="946431"/>
<dbReference type="KEGG" id="ecj:JW5146"/>
<dbReference type="KEGG" id="eco:b1033"/>
<dbReference type="KEGG" id="ecoc:C3026_06295"/>
<dbReference type="PATRIC" id="fig|1411691.4.peg.1238"/>
<dbReference type="EchoBASE" id="EB3628"/>
<dbReference type="eggNOG" id="COG0111">
    <property type="taxonomic scope" value="Bacteria"/>
</dbReference>
<dbReference type="HOGENOM" id="CLU_019796_1_0_6"/>
<dbReference type="InParanoid" id="P75913"/>
<dbReference type="OMA" id="VQMAEYV"/>
<dbReference type="OrthoDB" id="9787219at2"/>
<dbReference type="PhylomeDB" id="P75913"/>
<dbReference type="BioCyc" id="EcoCyc:G6539-MONOMER"/>
<dbReference type="BioCyc" id="MetaCyc:G6539-MONOMER"/>
<dbReference type="SABIO-RK" id="P75913"/>
<dbReference type="PRO" id="PR:P75913"/>
<dbReference type="Proteomes" id="UP000000625">
    <property type="component" value="Chromosome"/>
</dbReference>
<dbReference type="GO" id="GO:0005829">
    <property type="term" value="C:cytosol"/>
    <property type="evidence" value="ECO:0000314"/>
    <property type="project" value="EcoCyc"/>
</dbReference>
<dbReference type="GO" id="GO:0030267">
    <property type="term" value="F:glyoxylate reductase (NADPH) activity"/>
    <property type="evidence" value="ECO:0000314"/>
    <property type="project" value="EcoCyc"/>
</dbReference>
<dbReference type="GO" id="GO:0008465">
    <property type="term" value="F:hydroxypyruvate reductase (NADH) activity"/>
    <property type="evidence" value="ECO:0007669"/>
    <property type="project" value="RHEA"/>
</dbReference>
<dbReference type="GO" id="GO:0120509">
    <property type="term" value="F:hydroxypyruvate reductase (NADPH) activity"/>
    <property type="evidence" value="ECO:0007669"/>
    <property type="project" value="RHEA"/>
</dbReference>
<dbReference type="GO" id="GO:0016618">
    <property type="term" value="F:hydroxypyruvate reductase [NAD(P)H] activity"/>
    <property type="evidence" value="ECO:0000314"/>
    <property type="project" value="EcoCyc"/>
</dbReference>
<dbReference type="GO" id="GO:0051287">
    <property type="term" value="F:NAD binding"/>
    <property type="evidence" value="ECO:0007669"/>
    <property type="project" value="InterPro"/>
</dbReference>
<dbReference type="GO" id="GO:0033554">
    <property type="term" value="P:cellular response to stress"/>
    <property type="evidence" value="ECO:0000270"/>
    <property type="project" value="EcoCyc"/>
</dbReference>
<dbReference type="CDD" id="cd12164">
    <property type="entry name" value="GDH_like_2"/>
    <property type="match status" value="1"/>
</dbReference>
<dbReference type="FunFam" id="3.40.50.720:FF:000110">
    <property type="entry name" value="Glyoxylate/hydroxypyruvate reductase A"/>
    <property type="match status" value="1"/>
</dbReference>
<dbReference type="Gene3D" id="3.40.50.720">
    <property type="entry name" value="NAD(P)-binding Rossmann-like Domain"/>
    <property type="match status" value="2"/>
</dbReference>
<dbReference type="HAMAP" id="MF_01666">
    <property type="entry name" value="2_Hacid_dh_C_GhrA"/>
    <property type="match status" value="1"/>
</dbReference>
<dbReference type="InterPro" id="IPR029753">
    <property type="entry name" value="D-isomer_DH_CS"/>
</dbReference>
<dbReference type="InterPro" id="IPR006140">
    <property type="entry name" value="D-isomer_DH_NAD-bd"/>
</dbReference>
<dbReference type="InterPro" id="IPR023514">
    <property type="entry name" value="GhrA_Enterobacterales"/>
</dbReference>
<dbReference type="InterPro" id="IPR036291">
    <property type="entry name" value="NAD(P)-bd_dom_sf"/>
</dbReference>
<dbReference type="NCBIfam" id="NF012013">
    <property type="entry name" value="PRK15469.1"/>
    <property type="match status" value="1"/>
</dbReference>
<dbReference type="PANTHER" id="PTHR43333">
    <property type="entry name" value="2-HACID_DH_C DOMAIN-CONTAINING PROTEIN"/>
    <property type="match status" value="1"/>
</dbReference>
<dbReference type="PANTHER" id="PTHR43333:SF1">
    <property type="entry name" value="D-ISOMER SPECIFIC 2-HYDROXYACID DEHYDROGENASE NAD-BINDING DOMAIN-CONTAINING PROTEIN"/>
    <property type="match status" value="1"/>
</dbReference>
<dbReference type="Pfam" id="PF02826">
    <property type="entry name" value="2-Hacid_dh_C"/>
    <property type="match status" value="1"/>
</dbReference>
<dbReference type="SUPFAM" id="SSF51735">
    <property type="entry name" value="NAD(P)-binding Rossmann-fold domains"/>
    <property type="match status" value="1"/>
</dbReference>
<dbReference type="PROSITE" id="PS00671">
    <property type="entry name" value="D_2_HYDROXYACID_DH_3"/>
    <property type="match status" value="1"/>
</dbReference>
<sequence length="312" mass="35343">MDIIFYHPTFDTQWWIEALRKAIPQARVRAWKSGDNDSADYALVWHPPVEMLAGRDLKAVFALGAGVDSILSKLQAHPEMLNPSVPLFRLEDTGMGEQMQEYAVSQVLHWFRRFDDYRIQQNSSHWQPLPEYHREDFTIGILGAGVLGSKVAQSLQTWRFPLRCWSRTRKSWPGVQSFAGREELSAFLSQCRVLINLLPNTPETVGIINQQLLEKLPDGAYLLNLARGVHVVEDDLLAALDSGKVKGAMLDVFNREPLPPESPLWQHPRVTITPHVAAITRPAEAVEYISRTIAQLEKGERVCGQVDRARGY</sequence>
<reference key="1">
    <citation type="journal article" date="1996" name="DNA Res.">
        <title>A 718-kb DNA sequence of the Escherichia coli K-12 genome corresponding to the 12.7-28.0 min region on the linkage map.</title>
        <authorList>
            <person name="Oshima T."/>
            <person name="Aiba H."/>
            <person name="Baba T."/>
            <person name="Fujita K."/>
            <person name="Hayashi K."/>
            <person name="Honjo A."/>
            <person name="Ikemoto K."/>
            <person name="Inada T."/>
            <person name="Itoh T."/>
            <person name="Kajihara M."/>
            <person name="Kanai K."/>
            <person name="Kashimoto K."/>
            <person name="Kimura S."/>
            <person name="Kitagawa M."/>
            <person name="Makino K."/>
            <person name="Masuda S."/>
            <person name="Miki T."/>
            <person name="Mizobuchi K."/>
            <person name="Mori H."/>
            <person name="Motomura K."/>
            <person name="Nakamura Y."/>
            <person name="Nashimoto H."/>
            <person name="Nishio Y."/>
            <person name="Saito N."/>
            <person name="Sampei G."/>
            <person name="Seki Y."/>
            <person name="Tagami H."/>
            <person name="Takemoto K."/>
            <person name="Wada C."/>
            <person name="Yamamoto Y."/>
            <person name="Yano M."/>
            <person name="Horiuchi T."/>
        </authorList>
    </citation>
    <scope>NUCLEOTIDE SEQUENCE [LARGE SCALE GENOMIC DNA]</scope>
    <source>
        <strain>K12 / W3110 / ATCC 27325 / DSM 5911</strain>
    </source>
</reference>
<reference key="2">
    <citation type="journal article" date="1997" name="Science">
        <title>The complete genome sequence of Escherichia coli K-12.</title>
        <authorList>
            <person name="Blattner F.R."/>
            <person name="Plunkett G. III"/>
            <person name="Bloch C.A."/>
            <person name="Perna N.T."/>
            <person name="Burland V."/>
            <person name="Riley M."/>
            <person name="Collado-Vides J."/>
            <person name="Glasner J.D."/>
            <person name="Rode C.K."/>
            <person name="Mayhew G.F."/>
            <person name="Gregor J."/>
            <person name="Davis N.W."/>
            <person name="Kirkpatrick H.A."/>
            <person name="Goeden M.A."/>
            <person name="Rose D.J."/>
            <person name="Mau B."/>
            <person name="Shao Y."/>
        </authorList>
    </citation>
    <scope>NUCLEOTIDE SEQUENCE [LARGE SCALE GENOMIC DNA]</scope>
    <source>
        <strain>K12 / MG1655 / ATCC 47076</strain>
    </source>
</reference>
<reference key="3">
    <citation type="journal article" date="2006" name="Mol. Syst. Biol.">
        <title>Highly accurate genome sequences of Escherichia coli K-12 strains MG1655 and W3110.</title>
        <authorList>
            <person name="Hayashi K."/>
            <person name="Morooka N."/>
            <person name="Yamamoto Y."/>
            <person name="Fujita K."/>
            <person name="Isono K."/>
            <person name="Choi S."/>
            <person name="Ohtsubo E."/>
            <person name="Baba T."/>
            <person name="Wanner B.L."/>
            <person name="Mori H."/>
            <person name="Horiuchi T."/>
        </authorList>
    </citation>
    <scope>NUCLEOTIDE SEQUENCE [LARGE SCALE GENOMIC DNA]</scope>
    <source>
        <strain>K12 / W3110 / ATCC 27325 / DSM 5911</strain>
    </source>
</reference>
<reference key="4">
    <citation type="journal article" date="2001" name="Biochem. J.">
        <title>Biochemical characterization of the 2-ketoacid reductases encoded by ycdW and yiaE genes in Escherichia coli.</title>
        <authorList>
            <person name="Nunez M.F."/>
            <person name="Pellicer M.T."/>
            <person name="Badia J."/>
            <person name="Aguilar J."/>
            <person name="Baldoma L."/>
        </authorList>
    </citation>
    <scope>PROTEIN SEQUENCE OF 1-10</scope>
    <scope>CATALYTIC ACTIVITY</scope>
    <scope>SUBSTRATE SPECIFICITY</scope>
    <scope>INDUCTION</scope>
    <scope>SUBCELLULAR LOCATION</scope>
    <scope>BIOPHYSICOCHEMICAL PROPERTIES</scope>
    <source>
        <strain>K12 / MC4100 / ATCC 35695 / DSM 6574</strain>
    </source>
</reference>
<reference key="5">
    <citation type="journal article" date="1999" name="Electrophoresis">
        <title>Enrichment of low abundance proteins of Escherichia coli by hydroxyapatite chromatography.</title>
        <authorList>
            <person name="Fountoulakis M."/>
            <person name="Takacs M.-F."/>
            <person name="Berndt P."/>
            <person name="Langen H."/>
            <person name="Takacs B."/>
        </authorList>
    </citation>
    <scope>IDENTIFICATION BY MASS SPECTROMETRY</scope>
    <source>
        <strain>B / BL21</strain>
    </source>
</reference>
<protein>
    <recommendedName>
        <fullName>Glyoxylate/hydroxypyruvate reductase A</fullName>
        <ecNumber>1.1.1.79</ecNumber>
        <ecNumber>1.1.1.81</ecNumber>
    </recommendedName>
    <alternativeName>
        <fullName>2-ketoacid reductase</fullName>
    </alternativeName>
</protein>
<keyword id="KW-0002">3D-structure</keyword>
<keyword id="KW-0963">Cytoplasm</keyword>
<keyword id="KW-0903">Direct protein sequencing</keyword>
<keyword id="KW-0520">NAD</keyword>
<keyword id="KW-0521">NADP</keyword>
<keyword id="KW-0560">Oxidoreductase</keyword>
<keyword id="KW-1185">Reference proteome</keyword>
<accession>P75913</accession>
<accession>Q9R3M8</accession>
<gene>
    <name type="primary">ghrA</name>
    <name type="synonym">ycdW</name>
    <name type="ordered locus">b1033</name>
    <name type="ordered locus">JW5146</name>
</gene>
<feature type="chain" id="PRO_0000076028" description="Glyoxylate/hydroxypyruvate reductase A">
    <location>
        <begin position="1"/>
        <end position="312"/>
    </location>
</feature>
<feature type="active site" evidence="1">
    <location>
        <position position="227"/>
    </location>
</feature>
<feature type="active site" description="Proton donor" evidence="1">
    <location>
        <position position="275"/>
    </location>
</feature>
<feature type="strand" evidence="5">
    <location>
        <begin position="1"/>
        <end position="6"/>
    </location>
</feature>
<feature type="strand" evidence="5">
    <location>
        <begin position="8"/>
        <end position="10"/>
    </location>
</feature>
<feature type="helix" evidence="5">
    <location>
        <begin position="12"/>
        <end position="22"/>
    </location>
</feature>
<feature type="strand" evidence="5">
    <location>
        <begin position="26"/>
        <end position="30"/>
    </location>
</feature>
<feature type="strand" evidence="5">
    <location>
        <begin position="40"/>
        <end position="46"/>
    </location>
</feature>
<feature type="helix" evidence="5">
    <location>
        <begin position="49"/>
        <end position="52"/>
    </location>
</feature>
<feature type="strand" evidence="5">
    <location>
        <begin position="58"/>
        <end position="65"/>
    </location>
</feature>
<feature type="helix" evidence="5">
    <location>
        <begin position="68"/>
        <end position="76"/>
    </location>
</feature>
<feature type="helix" evidence="6">
    <location>
        <begin position="78"/>
        <end position="80"/>
    </location>
</feature>
<feature type="strand" evidence="6">
    <location>
        <begin position="87"/>
        <end position="89"/>
    </location>
</feature>
<feature type="helix" evidence="5">
    <location>
        <begin position="95"/>
        <end position="111"/>
    </location>
</feature>
<feature type="helix" evidence="5">
    <location>
        <begin position="114"/>
        <end position="122"/>
    </location>
</feature>
<feature type="helix" evidence="5">
    <location>
        <begin position="134"/>
        <end position="136"/>
    </location>
</feature>
<feature type="strand" evidence="5">
    <location>
        <begin position="139"/>
        <end position="142"/>
    </location>
</feature>
<feature type="helix" evidence="5">
    <location>
        <begin position="146"/>
        <end position="156"/>
    </location>
</feature>
<feature type="turn" evidence="5">
    <location>
        <begin position="157"/>
        <end position="159"/>
    </location>
</feature>
<feature type="strand" evidence="5">
    <location>
        <begin position="162"/>
        <end position="168"/>
    </location>
</feature>
<feature type="strand" evidence="5">
    <location>
        <begin position="175"/>
        <end position="180"/>
    </location>
</feature>
<feature type="helix" evidence="5">
    <location>
        <begin position="181"/>
        <end position="183"/>
    </location>
</feature>
<feature type="helix" evidence="5">
    <location>
        <begin position="184"/>
        <end position="188"/>
    </location>
</feature>
<feature type="strand" evidence="5">
    <location>
        <begin position="192"/>
        <end position="196"/>
    </location>
</feature>
<feature type="turn" evidence="5">
    <location>
        <begin position="202"/>
        <end position="206"/>
    </location>
</feature>
<feature type="helix" evidence="5">
    <location>
        <begin position="210"/>
        <end position="213"/>
    </location>
</feature>
<feature type="strand" evidence="5">
    <location>
        <begin position="220"/>
        <end position="224"/>
    </location>
</feature>
<feature type="helix" evidence="5">
    <location>
        <begin position="228"/>
        <end position="230"/>
    </location>
</feature>
<feature type="helix" evidence="5">
    <location>
        <begin position="233"/>
        <end position="241"/>
    </location>
</feature>
<feature type="strand" evidence="5">
    <location>
        <begin position="244"/>
        <end position="251"/>
    </location>
</feature>
<feature type="strand" evidence="5">
    <location>
        <begin position="254"/>
        <end position="257"/>
    </location>
</feature>
<feature type="turn" evidence="5">
    <location>
        <begin position="263"/>
        <end position="266"/>
    </location>
</feature>
<feature type="strand" evidence="5">
    <location>
        <begin position="270"/>
        <end position="272"/>
    </location>
</feature>
<feature type="helix" evidence="5">
    <location>
        <begin position="282"/>
        <end position="297"/>
    </location>
</feature>
<feature type="turn" evidence="5">
    <location>
        <begin position="308"/>
        <end position="311"/>
    </location>
</feature>